<gene>
    <name evidence="1" type="primary">lpxD2</name>
    <name type="ordered locus">lpl2873</name>
</gene>
<accession>Q5WSK5</accession>
<protein>
    <recommendedName>
        <fullName evidence="1">UDP-3-O-acylglucosamine N-acyltransferase 2</fullName>
        <ecNumber evidence="1">2.3.1.191</ecNumber>
    </recommendedName>
</protein>
<sequence length="343" mass="36231">MSNYQFTKPAGPFYLAELAEISGSTLYEGKGEAFTVSGLAKLSEATTHNLVMLHQKKYLKELKNTAARACIIGPEYVKFAPDSMYLLVHPNPYKAFALIAQAFYPSEKPAGFIASSAAIETSAVIGSNCYIAHGVYIGNNAKIGSGCQIGVNTYIGDGVTIGDDCLIEDNVSIRHAVIGKHVVIYPGARIGQDGFGFASDASGHYKIPHAGGVIIGNHVEIGANTCIDRGSLDNTVIEDWCRLDNLVQVGHNVKIGKGSIIVAQVGIAGSTELGEYVTLAGQAGVIGHLKIGKGATVLASGKVYKNVKSGDRVGGHPAVSISDWQKQIRFLKTAIKPKKSPKS</sequence>
<comment type="function">
    <text evidence="1">Catalyzes the N-acylation of UDP-3-O-acylglucosamine using 3-hydroxyacyl-ACP as the acyl donor. Is involved in the biosynthesis of lipid A, a phosphorylated glycolipid that anchors the lipopolysaccharide to the outer membrane of the cell.</text>
</comment>
<comment type="catalytic activity">
    <reaction evidence="1">
        <text>a UDP-3-O-[(3R)-3-hydroxyacyl]-alpha-D-glucosamine + a (3R)-hydroxyacyl-[ACP] = a UDP-2-N,3-O-bis[(3R)-3-hydroxyacyl]-alpha-D-glucosamine + holo-[ACP] + H(+)</text>
        <dbReference type="Rhea" id="RHEA:53836"/>
        <dbReference type="Rhea" id="RHEA-COMP:9685"/>
        <dbReference type="Rhea" id="RHEA-COMP:9945"/>
        <dbReference type="ChEBI" id="CHEBI:15378"/>
        <dbReference type="ChEBI" id="CHEBI:64479"/>
        <dbReference type="ChEBI" id="CHEBI:78827"/>
        <dbReference type="ChEBI" id="CHEBI:137740"/>
        <dbReference type="ChEBI" id="CHEBI:137748"/>
        <dbReference type="EC" id="2.3.1.191"/>
    </reaction>
</comment>
<comment type="pathway">
    <text evidence="1">Bacterial outer membrane biogenesis; LPS lipid A biosynthesis.</text>
</comment>
<comment type="subunit">
    <text evidence="1">Homotrimer.</text>
</comment>
<comment type="similarity">
    <text evidence="1">Belongs to the transferase hexapeptide repeat family. LpxD subfamily.</text>
</comment>
<organism>
    <name type="scientific">Legionella pneumophila (strain Lens)</name>
    <dbReference type="NCBI Taxonomy" id="297245"/>
    <lineage>
        <taxon>Bacteria</taxon>
        <taxon>Pseudomonadati</taxon>
        <taxon>Pseudomonadota</taxon>
        <taxon>Gammaproteobacteria</taxon>
        <taxon>Legionellales</taxon>
        <taxon>Legionellaceae</taxon>
        <taxon>Legionella</taxon>
    </lineage>
</organism>
<evidence type="ECO:0000255" key="1">
    <source>
        <dbReference type="HAMAP-Rule" id="MF_00523"/>
    </source>
</evidence>
<dbReference type="EC" id="2.3.1.191" evidence="1"/>
<dbReference type="EMBL" id="CR628337">
    <property type="protein sequence ID" value="CAH17117.1"/>
    <property type="molecule type" value="Genomic_DNA"/>
</dbReference>
<dbReference type="RefSeq" id="WP_011216787.1">
    <property type="nucleotide sequence ID" value="NC_006369.1"/>
</dbReference>
<dbReference type="SMR" id="Q5WSK5"/>
<dbReference type="KEGG" id="lpf:lpl2873"/>
<dbReference type="LegioList" id="lpl2873"/>
<dbReference type="HOGENOM" id="CLU_049865_0_0_6"/>
<dbReference type="UniPathway" id="UPA00973"/>
<dbReference type="Proteomes" id="UP000002517">
    <property type="component" value="Chromosome"/>
</dbReference>
<dbReference type="GO" id="GO:0016020">
    <property type="term" value="C:membrane"/>
    <property type="evidence" value="ECO:0007669"/>
    <property type="project" value="GOC"/>
</dbReference>
<dbReference type="GO" id="GO:0016410">
    <property type="term" value="F:N-acyltransferase activity"/>
    <property type="evidence" value="ECO:0007669"/>
    <property type="project" value="InterPro"/>
</dbReference>
<dbReference type="GO" id="GO:0009245">
    <property type="term" value="P:lipid A biosynthetic process"/>
    <property type="evidence" value="ECO:0007669"/>
    <property type="project" value="UniProtKB-UniRule"/>
</dbReference>
<dbReference type="CDD" id="cd03352">
    <property type="entry name" value="LbH_LpxD"/>
    <property type="match status" value="1"/>
</dbReference>
<dbReference type="Gene3D" id="2.160.10.10">
    <property type="entry name" value="Hexapeptide repeat proteins"/>
    <property type="match status" value="1"/>
</dbReference>
<dbReference type="Gene3D" id="3.40.1390.10">
    <property type="entry name" value="MurE/MurF, N-terminal domain"/>
    <property type="match status" value="1"/>
</dbReference>
<dbReference type="HAMAP" id="MF_00523">
    <property type="entry name" value="LpxD"/>
    <property type="match status" value="1"/>
</dbReference>
<dbReference type="InterPro" id="IPR001451">
    <property type="entry name" value="Hexapep"/>
</dbReference>
<dbReference type="InterPro" id="IPR007691">
    <property type="entry name" value="LpxD"/>
</dbReference>
<dbReference type="InterPro" id="IPR011004">
    <property type="entry name" value="Trimer_LpxA-like_sf"/>
</dbReference>
<dbReference type="InterPro" id="IPR020573">
    <property type="entry name" value="UDP_GlcNAc_AcTrfase_non-rep"/>
</dbReference>
<dbReference type="NCBIfam" id="TIGR01853">
    <property type="entry name" value="lipid_A_lpxD"/>
    <property type="match status" value="1"/>
</dbReference>
<dbReference type="NCBIfam" id="NF002060">
    <property type="entry name" value="PRK00892.1"/>
    <property type="match status" value="1"/>
</dbReference>
<dbReference type="PANTHER" id="PTHR43378">
    <property type="entry name" value="UDP-3-O-ACYLGLUCOSAMINE N-ACYLTRANSFERASE"/>
    <property type="match status" value="1"/>
</dbReference>
<dbReference type="PANTHER" id="PTHR43378:SF2">
    <property type="entry name" value="UDP-3-O-ACYLGLUCOSAMINE N-ACYLTRANSFERASE 1, MITOCHONDRIAL-RELATED"/>
    <property type="match status" value="1"/>
</dbReference>
<dbReference type="Pfam" id="PF00132">
    <property type="entry name" value="Hexapep"/>
    <property type="match status" value="1"/>
</dbReference>
<dbReference type="Pfam" id="PF04613">
    <property type="entry name" value="LpxD"/>
    <property type="match status" value="1"/>
</dbReference>
<dbReference type="SUPFAM" id="SSF51161">
    <property type="entry name" value="Trimeric LpxA-like enzymes"/>
    <property type="match status" value="1"/>
</dbReference>
<feature type="chain" id="PRO_0000264388" description="UDP-3-O-acylglucosamine N-acyltransferase 2">
    <location>
        <begin position="1"/>
        <end position="343"/>
    </location>
</feature>
<feature type="active site" description="Proton acceptor" evidence="1">
    <location>
        <position position="251"/>
    </location>
</feature>
<proteinExistence type="inferred from homology"/>
<name>LPXD2_LEGPL</name>
<reference key="1">
    <citation type="journal article" date="2004" name="Nat. Genet.">
        <title>Evidence in the Legionella pneumophila genome for exploitation of host cell functions and high genome plasticity.</title>
        <authorList>
            <person name="Cazalet C."/>
            <person name="Rusniok C."/>
            <person name="Brueggemann H."/>
            <person name="Zidane N."/>
            <person name="Magnier A."/>
            <person name="Ma L."/>
            <person name="Tichit M."/>
            <person name="Jarraud S."/>
            <person name="Bouchier C."/>
            <person name="Vandenesch F."/>
            <person name="Kunst F."/>
            <person name="Etienne J."/>
            <person name="Glaser P."/>
            <person name="Buchrieser C."/>
        </authorList>
    </citation>
    <scope>NUCLEOTIDE SEQUENCE [LARGE SCALE GENOMIC DNA]</scope>
    <source>
        <strain>Lens</strain>
    </source>
</reference>
<keyword id="KW-0012">Acyltransferase</keyword>
<keyword id="KW-0441">Lipid A biosynthesis</keyword>
<keyword id="KW-0444">Lipid biosynthesis</keyword>
<keyword id="KW-0443">Lipid metabolism</keyword>
<keyword id="KW-0677">Repeat</keyword>
<keyword id="KW-0808">Transferase</keyword>